<protein>
    <recommendedName>
        <fullName>Putative beta-lactamase HcpD</fullName>
        <ecNumber>3.5.2.6</ecNumber>
    </recommendedName>
    <alternativeName>
        <fullName>Cysteine-rich protein D</fullName>
    </alternativeName>
    <alternativeName>
        <fullName>Penicillin-binding protein 4</fullName>
        <shortName>PBP 4</shortName>
    </alternativeName>
</protein>
<reference key="1">
    <citation type="journal article" date="1997" name="Nature">
        <title>The complete genome sequence of the gastric pathogen Helicobacter pylori.</title>
        <authorList>
            <person name="Tomb J.-F."/>
            <person name="White O."/>
            <person name="Kerlavage A.R."/>
            <person name="Clayton R.A."/>
            <person name="Sutton G.G."/>
            <person name="Fleischmann R.D."/>
            <person name="Ketchum K.A."/>
            <person name="Klenk H.-P."/>
            <person name="Gill S.R."/>
            <person name="Dougherty B.A."/>
            <person name="Nelson K.E."/>
            <person name="Quackenbush J."/>
            <person name="Zhou L."/>
            <person name="Kirkness E.F."/>
            <person name="Peterson S.N."/>
            <person name="Loftus B.J."/>
            <person name="Richardson D.L."/>
            <person name="Dodson R.J."/>
            <person name="Khalak H.G."/>
            <person name="Glodek A."/>
            <person name="McKenney K."/>
            <person name="FitzGerald L.M."/>
            <person name="Lee N."/>
            <person name="Adams M.D."/>
            <person name="Hickey E.K."/>
            <person name="Berg D.E."/>
            <person name="Gocayne J.D."/>
            <person name="Utterback T.R."/>
            <person name="Peterson J.D."/>
            <person name="Kelley J.M."/>
            <person name="Cotton M.D."/>
            <person name="Weidman J.F."/>
            <person name="Fujii C."/>
            <person name="Bowman C."/>
            <person name="Watthey L."/>
            <person name="Wallin E."/>
            <person name="Hayes W.S."/>
            <person name="Borodovsky M."/>
            <person name="Karp P.D."/>
            <person name="Smith H.O."/>
            <person name="Fraser C.M."/>
            <person name="Venter J.C."/>
        </authorList>
    </citation>
    <scope>NUCLEOTIDE SEQUENCE [LARGE SCALE GENOMIC DNA]</scope>
    <source>
        <strain>ATCC 700392 / 26695</strain>
    </source>
</reference>
<reference key="2">
    <citation type="journal article" date="1999" name="J. Bacteriol.">
        <title>Identification of a novel penicillin-binding protein from Helicobacter pylori.</title>
        <authorList>
            <person name="Krishnamurthy P."/>
            <person name="Parlow M.H."/>
            <person name="Schneider J."/>
            <person name="Burroughs S."/>
            <person name="Wickland C."/>
            <person name="Vakil N.B."/>
            <person name="Dunn B.E."/>
            <person name="Phadnis S.H."/>
        </authorList>
    </citation>
    <scope>PENICILLIN-BINDING</scope>
</reference>
<feature type="signal peptide" evidence="3">
    <location>
        <begin position="1"/>
        <end position="25"/>
    </location>
</feature>
<feature type="chain" id="PRO_0000013198" description="Putative beta-lactamase HcpD">
    <location>
        <begin position="26"/>
        <end position="306"/>
    </location>
</feature>
<feature type="repeat" description="TPR 1">
    <location>
        <begin position="28"/>
        <end position="61"/>
    </location>
</feature>
<feature type="repeat" description="TPR 2">
    <location>
        <begin position="96"/>
        <end position="133"/>
    </location>
</feature>
<feature type="repeat" description="TPR 3">
    <location>
        <begin position="168"/>
        <end position="205"/>
    </location>
</feature>
<feature type="repeat" description="TPR 4">
    <location>
        <begin position="240"/>
        <end position="277"/>
    </location>
</feature>
<feature type="disulfide bond" evidence="2">
    <location>
        <begin position="55"/>
        <end position="63"/>
    </location>
</feature>
<feature type="disulfide bond" evidence="2">
    <location>
        <begin position="91"/>
        <end position="99"/>
    </location>
</feature>
<feature type="disulfide bond" evidence="2">
    <location>
        <begin position="127"/>
        <end position="135"/>
    </location>
</feature>
<feature type="disulfide bond" evidence="2">
    <location>
        <begin position="163"/>
        <end position="171"/>
    </location>
</feature>
<feature type="disulfide bond" evidence="2">
    <location>
        <begin position="199"/>
        <end position="207"/>
    </location>
</feature>
<feature type="disulfide bond" evidence="2">
    <location>
        <begin position="235"/>
        <end position="243"/>
    </location>
</feature>
<feature type="disulfide bond" evidence="2">
    <location>
        <begin position="271"/>
        <end position="279"/>
    </location>
</feature>
<evidence type="ECO:0000250" key="1"/>
<evidence type="ECO:0000255" key="2"/>
<evidence type="ECO:0000255" key="3">
    <source>
        <dbReference type="PROSITE-ProRule" id="PRU00303"/>
    </source>
</evidence>
<evidence type="ECO:0000305" key="4"/>
<dbReference type="EC" id="3.5.2.6"/>
<dbReference type="EMBL" id="AE000511">
    <property type="protein sequence ID" value="AAD07230.1"/>
    <property type="molecule type" value="Genomic_DNA"/>
</dbReference>
<dbReference type="PIR" id="H64539">
    <property type="entry name" value="H64539"/>
</dbReference>
<dbReference type="RefSeq" id="NP_206959.1">
    <property type="nucleotide sequence ID" value="NC_000915.1"/>
</dbReference>
<dbReference type="RefSeq" id="WP_000597856.1">
    <property type="nucleotide sequence ID" value="NC_018939.1"/>
</dbReference>
<dbReference type="SMR" id="O24968"/>
<dbReference type="PaxDb" id="85962-C694_00800"/>
<dbReference type="EnsemblBacteria" id="AAD07230">
    <property type="protein sequence ID" value="AAD07230"/>
    <property type="gene ID" value="HP_0160"/>
</dbReference>
<dbReference type="KEGG" id="heo:C694_00800"/>
<dbReference type="KEGG" id="hpy:HP_0160"/>
<dbReference type="PATRIC" id="fig|85962.47.peg.173"/>
<dbReference type="eggNOG" id="COG0790">
    <property type="taxonomic scope" value="Bacteria"/>
</dbReference>
<dbReference type="InParanoid" id="O24968"/>
<dbReference type="OrthoDB" id="5321246at2"/>
<dbReference type="PhylomeDB" id="O24968"/>
<dbReference type="Proteomes" id="UP000000429">
    <property type="component" value="Chromosome"/>
</dbReference>
<dbReference type="GO" id="GO:0005576">
    <property type="term" value="C:extracellular region"/>
    <property type="evidence" value="ECO:0007669"/>
    <property type="project" value="UniProtKB-SubCell"/>
</dbReference>
<dbReference type="GO" id="GO:0008800">
    <property type="term" value="F:beta-lactamase activity"/>
    <property type="evidence" value="ECO:0007669"/>
    <property type="project" value="UniProtKB-EC"/>
</dbReference>
<dbReference type="GO" id="GO:0046677">
    <property type="term" value="P:response to antibiotic"/>
    <property type="evidence" value="ECO:0007669"/>
    <property type="project" value="UniProtKB-KW"/>
</dbReference>
<dbReference type="Gene3D" id="1.25.40.10">
    <property type="entry name" value="Tetratricopeptide repeat domain"/>
    <property type="match status" value="1"/>
</dbReference>
<dbReference type="InterPro" id="IPR040239">
    <property type="entry name" value="HcpB-like"/>
</dbReference>
<dbReference type="InterPro" id="IPR006597">
    <property type="entry name" value="Sel1-like"/>
</dbReference>
<dbReference type="InterPro" id="IPR011990">
    <property type="entry name" value="TPR-like_helical_dom_sf"/>
</dbReference>
<dbReference type="PANTHER" id="PTHR13891">
    <property type="entry name" value="CYTOCHROME C OXIDASE ASSEMBLY FACTOR 7"/>
    <property type="match status" value="1"/>
</dbReference>
<dbReference type="PANTHER" id="PTHR13891:SF1">
    <property type="entry name" value="CYTOCHROME C OXIDASE ASSEMBLY FACTOR 7"/>
    <property type="match status" value="1"/>
</dbReference>
<dbReference type="Pfam" id="PF08238">
    <property type="entry name" value="Sel1"/>
    <property type="match status" value="7"/>
</dbReference>
<dbReference type="SMART" id="SM00671">
    <property type="entry name" value="SEL1"/>
    <property type="match status" value="7"/>
</dbReference>
<dbReference type="SUPFAM" id="SSF81901">
    <property type="entry name" value="HCP-like"/>
    <property type="match status" value="1"/>
</dbReference>
<dbReference type="PROSITE" id="PS51257">
    <property type="entry name" value="PROKAR_LIPOPROTEIN"/>
    <property type="match status" value="1"/>
</dbReference>
<proteinExistence type="evidence at protein level"/>
<gene>
    <name type="primary">hcpD</name>
    <name type="ordered locus">HP_0160</name>
</gene>
<comment type="function">
    <text evidence="1">May hydrolyze 6-aminopenicillinic acid and 7-aminocephalosporanic acid (ACA) derivatives (By similarity). Binds to penicillin.</text>
</comment>
<comment type="catalytic activity">
    <reaction>
        <text>a beta-lactam + H2O = a substituted beta-amino acid</text>
        <dbReference type="Rhea" id="RHEA:20401"/>
        <dbReference type="ChEBI" id="CHEBI:15377"/>
        <dbReference type="ChEBI" id="CHEBI:35627"/>
        <dbReference type="ChEBI" id="CHEBI:140347"/>
        <dbReference type="EC" id="3.5.2.6"/>
    </reaction>
</comment>
<comment type="subcellular location">
    <subcellularLocation>
        <location evidence="1">Secreted</location>
    </subcellularLocation>
</comment>
<comment type="similarity">
    <text evidence="4">Belongs to the hcp beta-lactamase family.</text>
</comment>
<name>HCPD_HELPY</name>
<organism>
    <name type="scientific">Helicobacter pylori (strain ATCC 700392 / 26695)</name>
    <name type="common">Campylobacter pylori</name>
    <dbReference type="NCBI Taxonomy" id="85962"/>
    <lineage>
        <taxon>Bacteria</taxon>
        <taxon>Pseudomonadati</taxon>
        <taxon>Campylobacterota</taxon>
        <taxon>Epsilonproteobacteria</taxon>
        <taxon>Campylobacterales</taxon>
        <taxon>Helicobacteraceae</taxon>
        <taxon>Helicobacter</taxon>
    </lineage>
</organism>
<sequence>MIKSWTKKWFLILFLMASCSSYLVATTGEKYFKMATQAFKRGDYHKAVAFYKRSCNLRVGVGCTSLGSMYEDGDGVDQNITKAVFYYRRGCNLRNHLACASLGSMYEDGDGVQKNLPKAIYYYRRGCHLKGGVSCGSLGFMYFNGTGVKQNYAKALFLSKYACSLNYGISCNFVGYMYRNAKGVQKDLKKALANFKRGCHLKDGASCVSLGYMYEVGMDVKQNGEQALNLYKKGCYLKRGSGCHNVAVMYYTGKGVPKDLDKAISYYKKGCTLGFSGSCKVLEEVIGKKSDDLQDDAQNDTQDDMQ</sequence>
<keyword id="KW-0046">Antibiotic resistance</keyword>
<keyword id="KW-1015">Disulfide bond</keyword>
<keyword id="KW-0378">Hydrolase</keyword>
<keyword id="KW-1185">Reference proteome</keyword>
<keyword id="KW-0677">Repeat</keyword>
<keyword id="KW-0964">Secreted</keyword>
<keyword id="KW-0732">Signal</keyword>
<keyword id="KW-0802">TPR repeat</keyword>
<accession>O24968</accession>